<feature type="chain" id="PRO_0000093532" description="Long neurotoxin 1" evidence="3">
    <location>
        <begin position="1"/>
        <end position="71"/>
    </location>
</feature>
<feature type="disulfide bond" evidence="1">
    <location>
        <begin position="3"/>
        <end position="20"/>
    </location>
</feature>
<feature type="disulfide bond" evidence="1">
    <location>
        <begin position="14"/>
        <end position="41"/>
    </location>
</feature>
<feature type="disulfide bond" evidence="1">
    <location>
        <begin position="26"/>
        <end position="30"/>
    </location>
</feature>
<feature type="disulfide bond" evidence="1">
    <location>
        <begin position="45"/>
        <end position="56"/>
    </location>
</feature>
<feature type="disulfide bond" evidence="1">
    <location>
        <begin position="57"/>
        <end position="62"/>
    </location>
</feature>
<feature type="sequence variant">
    <original>N</original>
    <variation>V</variation>
    <location>
        <position position="28"/>
    </location>
</feature>
<feature type="sequence variant">
    <original>R</original>
    <variation>A</variation>
    <location>
        <position position="36"/>
    </location>
</feature>
<name>3L221_NAJAN</name>
<accession>P34074</accession>
<organism>
    <name type="scientific">Naja annulata annulata</name>
    <name type="common">Banded water cobra</name>
    <name type="synonym">Boulengerina annulata annulata</name>
    <dbReference type="NCBI Taxonomy" id="8610"/>
    <lineage>
        <taxon>Eukaryota</taxon>
        <taxon>Metazoa</taxon>
        <taxon>Chordata</taxon>
        <taxon>Craniata</taxon>
        <taxon>Vertebrata</taxon>
        <taxon>Euteleostomi</taxon>
        <taxon>Lepidosauria</taxon>
        <taxon>Squamata</taxon>
        <taxon>Bifurcata</taxon>
        <taxon>Unidentata</taxon>
        <taxon>Episquamata</taxon>
        <taxon>Toxicofera</taxon>
        <taxon>Serpentes</taxon>
        <taxon>Colubroidea</taxon>
        <taxon>Elapidae</taxon>
        <taxon>Elapinae</taxon>
        <taxon>Naja</taxon>
    </lineage>
</organism>
<keyword id="KW-0008">Acetylcholine receptor inhibiting toxin</keyword>
<keyword id="KW-0903">Direct protein sequencing</keyword>
<keyword id="KW-1015">Disulfide bond</keyword>
<keyword id="KW-0872">Ion channel impairing toxin</keyword>
<keyword id="KW-0528">Neurotoxin</keyword>
<keyword id="KW-0629">Postsynaptic neurotoxin</keyword>
<keyword id="KW-0964">Secreted</keyword>
<keyword id="KW-0800">Toxin</keyword>
<proteinExistence type="evidence at protein level"/>
<comment type="function">
    <text evidence="2 4">Binds with high affinity to muscular (alpha-1/CHRNA1) and neuronal (alpha-7/CHRNA7) nicotinic acetylcholine receptor (nAChR) and hinders acetylcholine binding to the receptor, thereby impairing neuromuscular and neuronal transmission.</text>
</comment>
<comment type="subcellular location">
    <subcellularLocation>
        <location evidence="4">Secreted</location>
    </subcellularLocation>
</comment>
<comment type="tissue specificity">
    <text evidence="6">Expressed by the venom gland.</text>
</comment>
<comment type="toxic dose">
    <text evidence="4">LD(50) is 0.086 mg/kg by intraperitoneal injection.</text>
</comment>
<comment type="similarity">
    <text evidence="5">Belongs to the three-finger toxin family. Long-chain subfamily. Type II alpha-neurotoxin sub-subfamily.</text>
</comment>
<evidence type="ECO:0000250" key="1">
    <source>
        <dbReference type="UniProtKB" id="P25671"/>
    </source>
</evidence>
<evidence type="ECO:0000250" key="2">
    <source>
        <dbReference type="UniProtKB" id="P60615"/>
    </source>
</evidence>
<evidence type="ECO:0000269" key="3">
    <source>
    </source>
</evidence>
<evidence type="ECO:0000269" key="4">
    <source>
    </source>
</evidence>
<evidence type="ECO:0000305" key="5"/>
<evidence type="ECO:0000305" key="6">
    <source>
    </source>
</evidence>
<dbReference type="PIR" id="C39327">
    <property type="entry name" value="C39327"/>
</dbReference>
<dbReference type="SMR" id="P34074"/>
<dbReference type="GO" id="GO:0005576">
    <property type="term" value="C:extracellular region"/>
    <property type="evidence" value="ECO:0007669"/>
    <property type="project" value="UniProtKB-SubCell"/>
</dbReference>
<dbReference type="GO" id="GO:0030550">
    <property type="term" value="F:acetylcholine receptor inhibitor activity"/>
    <property type="evidence" value="ECO:0007669"/>
    <property type="project" value="UniProtKB-KW"/>
</dbReference>
<dbReference type="GO" id="GO:0099106">
    <property type="term" value="F:ion channel regulator activity"/>
    <property type="evidence" value="ECO:0007669"/>
    <property type="project" value="UniProtKB-KW"/>
</dbReference>
<dbReference type="GO" id="GO:0090729">
    <property type="term" value="F:toxin activity"/>
    <property type="evidence" value="ECO:0007669"/>
    <property type="project" value="UniProtKB-KW"/>
</dbReference>
<dbReference type="CDD" id="cd00206">
    <property type="entry name" value="TFP_snake_toxin"/>
    <property type="match status" value="1"/>
</dbReference>
<dbReference type="Gene3D" id="2.10.60.10">
    <property type="entry name" value="CD59"/>
    <property type="match status" value="1"/>
</dbReference>
<dbReference type="InterPro" id="IPR003571">
    <property type="entry name" value="Snake_3FTx"/>
</dbReference>
<dbReference type="InterPro" id="IPR045860">
    <property type="entry name" value="Snake_toxin-like_sf"/>
</dbReference>
<dbReference type="InterPro" id="IPR018354">
    <property type="entry name" value="Snake_toxin_con_site"/>
</dbReference>
<dbReference type="InterPro" id="IPR054131">
    <property type="entry name" value="Toxin_cobra-type"/>
</dbReference>
<dbReference type="Pfam" id="PF21947">
    <property type="entry name" value="Toxin_cobra-type"/>
    <property type="match status" value="1"/>
</dbReference>
<dbReference type="SUPFAM" id="SSF57302">
    <property type="entry name" value="Snake toxin-like"/>
    <property type="match status" value="1"/>
</dbReference>
<dbReference type="PROSITE" id="PS00272">
    <property type="entry name" value="SNAKE_TOXIN"/>
    <property type="match status" value="1"/>
</dbReference>
<protein>
    <recommendedName>
        <fullName>Long neurotoxin 1</fullName>
        <shortName>NXL1</shortName>
    </recommendedName>
</protein>
<reference key="1">
    <citation type="journal article" date="2004" name="Toxicon">
        <title>Complete amino acid sequence and phylogenetic analysis of a long-chain neurotoxin from the venom of the African banded water cobra, Boulengerina annulata.</title>
        <authorList>
            <person name="Ogawa Y."/>
            <person name="Yanoshita R."/>
            <person name="Kuch U."/>
            <person name="Samejima Y."/>
            <person name="Mebs D."/>
        </authorList>
    </citation>
    <scope>PROTEIN SEQUENCE</scope>
    <source>
        <tissue>Venom</tissue>
    </source>
</reference>
<reference key="2">
    <citation type="journal article" date="1991" name="Toxicon">
        <title>Lethal toxins and cross-neutralization of venoms from the African water cobras, Boulengerina annulata annulata and Boulengerina christyi.</title>
        <authorList>
            <person name="Weinstein S.A."/>
            <person name="Schmidt J.J."/>
            <person name="Smith L.A."/>
        </authorList>
    </citation>
    <scope>PROTEIN SEQUENCE OF 1-28</scope>
    <scope>FUNCTION</scope>
    <scope>TOXIC DOSE</scope>
    <scope>SUBCELLULAR LOCATION</scope>
    <source>
        <tissue>Venom</tissue>
    </source>
</reference>
<sequence>IRCFITPRVSSQACPDGHVCYTKTWCDNFCGINGKRVDLGCAATCPTVKPGVDIKCCSTDNCNPFPTRKRP</sequence>